<evidence type="ECO:0000255" key="1">
    <source>
        <dbReference type="HAMAP-Rule" id="MF_00068"/>
    </source>
</evidence>
<dbReference type="EC" id="4.2.1.126" evidence="1"/>
<dbReference type="EMBL" id="CP000247">
    <property type="protein sequence ID" value="ABG70439.1"/>
    <property type="molecule type" value="Genomic_DNA"/>
</dbReference>
<dbReference type="RefSeq" id="WP_001175629.1">
    <property type="nucleotide sequence ID" value="NC_008253.1"/>
</dbReference>
<dbReference type="SMR" id="Q0TF40"/>
<dbReference type="KEGG" id="ecp:ECP_2450"/>
<dbReference type="HOGENOM" id="CLU_049049_1_1_6"/>
<dbReference type="UniPathway" id="UPA00342"/>
<dbReference type="UniPathway" id="UPA00343"/>
<dbReference type="UniPathway" id="UPA00544"/>
<dbReference type="Proteomes" id="UP000009182">
    <property type="component" value="Chromosome"/>
</dbReference>
<dbReference type="GO" id="GO:0097367">
    <property type="term" value="F:carbohydrate derivative binding"/>
    <property type="evidence" value="ECO:0007669"/>
    <property type="project" value="InterPro"/>
</dbReference>
<dbReference type="GO" id="GO:0016835">
    <property type="term" value="F:carbon-oxygen lyase activity"/>
    <property type="evidence" value="ECO:0007669"/>
    <property type="project" value="UniProtKB-UniRule"/>
</dbReference>
<dbReference type="GO" id="GO:0016803">
    <property type="term" value="F:ether hydrolase activity"/>
    <property type="evidence" value="ECO:0007669"/>
    <property type="project" value="TreeGrafter"/>
</dbReference>
<dbReference type="GO" id="GO:0097175">
    <property type="term" value="P:1,6-anhydro-N-acetyl-beta-muramic acid catabolic process"/>
    <property type="evidence" value="ECO:0007669"/>
    <property type="project" value="UniProtKB-UniRule"/>
</dbReference>
<dbReference type="GO" id="GO:0046348">
    <property type="term" value="P:amino sugar catabolic process"/>
    <property type="evidence" value="ECO:0007669"/>
    <property type="project" value="InterPro"/>
</dbReference>
<dbReference type="GO" id="GO:0097173">
    <property type="term" value="P:N-acetylmuramic acid catabolic process"/>
    <property type="evidence" value="ECO:0007669"/>
    <property type="project" value="UniProtKB-UniPathway"/>
</dbReference>
<dbReference type="GO" id="GO:0009254">
    <property type="term" value="P:peptidoglycan turnover"/>
    <property type="evidence" value="ECO:0007669"/>
    <property type="project" value="UniProtKB-UniRule"/>
</dbReference>
<dbReference type="CDD" id="cd05007">
    <property type="entry name" value="SIS_Etherase"/>
    <property type="match status" value="1"/>
</dbReference>
<dbReference type="FunFam" id="1.10.8.1080:FF:000001">
    <property type="entry name" value="N-acetylmuramic acid 6-phosphate etherase"/>
    <property type="match status" value="1"/>
</dbReference>
<dbReference type="FunFam" id="3.40.50.10490:FF:000014">
    <property type="entry name" value="N-acetylmuramic acid 6-phosphate etherase"/>
    <property type="match status" value="1"/>
</dbReference>
<dbReference type="Gene3D" id="1.10.8.1080">
    <property type="match status" value="1"/>
</dbReference>
<dbReference type="Gene3D" id="3.40.50.10490">
    <property type="entry name" value="Glucose-6-phosphate isomerase like protein, domain 1"/>
    <property type="match status" value="1"/>
</dbReference>
<dbReference type="HAMAP" id="MF_00068">
    <property type="entry name" value="MurQ"/>
    <property type="match status" value="1"/>
</dbReference>
<dbReference type="InterPro" id="IPR005488">
    <property type="entry name" value="Etherase_MurQ"/>
</dbReference>
<dbReference type="InterPro" id="IPR005486">
    <property type="entry name" value="Glucokinase_regulatory_CS"/>
</dbReference>
<dbReference type="InterPro" id="IPR040190">
    <property type="entry name" value="MURQ/GCKR"/>
</dbReference>
<dbReference type="InterPro" id="IPR001347">
    <property type="entry name" value="SIS_dom"/>
</dbReference>
<dbReference type="InterPro" id="IPR046348">
    <property type="entry name" value="SIS_dom_sf"/>
</dbReference>
<dbReference type="NCBIfam" id="TIGR00274">
    <property type="entry name" value="N-acetylmuramic acid 6-phosphate etherase"/>
    <property type="match status" value="1"/>
</dbReference>
<dbReference type="NCBIfam" id="NF003915">
    <property type="entry name" value="PRK05441.1"/>
    <property type="match status" value="1"/>
</dbReference>
<dbReference type="NCBIfam" id="NF009222">
    <property type="entry name" value="PRK12570.1"/>
    <property type="match status" value="1"/>
</dbReference>
<dbReference type="PANTHER" id="PTHR10088">
    <property type="entry name" value="GLUCOKINASE REGULATORY PROTEIN"/>
    <property type="match status" value="1"/>
</dbReference>
<dbReference type="PANTHER" id="PTHR10088:SF4">
    <property type="entry name" value="GLUCOKINASE REGULATORY PROTEIN"/>
    <property type="match status" value="1"/>
</dbReference>
<dbReference type="Pfam" id="PF22645">
    <property type="entry name" value="GKRP_SIS_N"/>
    <property type="match status" value="1"/>
</dbReference>
<dbReference type="SUPFAM" id="SSF53697">
    <property type="entry name" value="SIS domain"/>
    <property type="match status" value="1"/>
</dbReference>
<dbReference type="PROSITE" id="PS01272">
    <property type="entry name" value="GCKR"/>
    <property type="match status" value="1"/>
</dbReference>
<dbReference type="PROSITE" id="PS51464">
    <property type="entry name" value="SIS"/>
    <property type="match status" value="1"/>
</dbReference>
<comment type="function">
    <text evidence="1">Specifically catalyzes the cleavage of the D-lactyl ether substituent of MurNAc 6-phosphate, producing GlcNAc 6-phosphate and D-lactate. Together with AnmK, is also required for the utilization of anhydro-N-acetylmuramic acid (anhMurNAc) either imported from the medium or derived from its own cell wall murein, and thus plays a role in cell wall recycling.</text>
</comment>
<comment type="catalytic activity">
    <reaction evidence="1">
        <text>N-acetyl-D-muramate 6-phosphate + H2O = N-acetyl-D-glucosamine 6-phosphate + (R)-lactate</text>
        <dbReference type="Rhea" id="RHEA:26410"/>
        <dbReference type="ChEBI" id="CHEBI:15377"/>
        <dbReference type="ChEBI" id="CHEBI:16004"/>
        <dbReference type="ChEBI" id="CHEBI:57513"/>
        <dbReference type="ChEBI" id="CHEBI:58722"/>
        <dbReference type="EC" id="4.2.1.126"/>
    </reaction>
</comment>
<comment type="pathway">
    <text evidence="1">Amino-sugar metabolism; 1,6-anhydro-N-acetylmuramate degradation.</text>
</comment>
<comment type="pathway">
    <text evidence="1">Amino-sugar metabolism; N-acetylmuramate degradation.</text>
</comment>
<comment type="pathway">
    <text evidence="1">Cell wall biogenesis; peptidoglycan recycling.</text>
</comment>
<comment type="subunit">
    <text evidence="1">Homodimer.</text>
</comment>
<comment type="induction">
    <text evidence="1">Induced by MurNAc 6-phosphate that releases the repressor MurR from the DNA. Repressed by MurR in the absence of MurNAc 6-phosphate.</text>
</comment>
<comment type="miscellaneous">
    <text evidence="1">A lyase-type mechanism (elimination/hydration) is suggested for the cleavage of the lactyl ether bond of MurNAc 6-phosphate, with the formation of an alpha,beta-unsaturated aldehyde intermediate with (E)-stereochemistry, followed by the syn addition of water to give product.</text>
</comment>
<comment type="similarity">
    <text evidence="1">Belongs to the GCKR-like family. MurNAc-6-P etherase subfamily.</text>
</comment>
<accession>Q0TF40</accession>
<protein>
    <recommendedName>
        <fullName evidence="1">N-acetylmuramic acid 6-phosphate etherase</fullName>
        <shortName evidence="1">MurNAc-6-P etherase</shortName>
        <ecNumber evidence="1">4.2.1.126</ecNumber>
    </recommendedName>
    <alternativeName>
        <fullName evidence="1">N-acetylmuramic acid 6-phosphate hydrolase</fullName>
    </alternativeName>
    <alternativeName>
        <fullName evidence="1">N-acetylmuramic acid 6-phosphate lyase</fullName>
    </alternativeName>
</protein>
<proteinExistence type="inferred from homology"/>
<reference key="1">
    <citation type="journal article" date="2006" name="Mol. Microbiol.">
        <title>Role of pathogenicity island-associated integrases in the genome plasticity of uropathogenic Escherichia coli strain 536.</title>
        <authorList>
            <person name="Hochhut B."/>
            <person name="Wilde C."/>
            <person name="Balling G."/>
            <person name="Middendorf B."/>
            <person name="Dobrindt U."/>
            <person name="Brzuszkiewicz E."/>
            <person name="Gottschalk G."/>
            <person name="Carniel E."/>
            <person name="Hacker J."/>
        </authorList>
    </citation>
    <scope>NUCLEOTIDE SEQUENCE [LARGE SCALE GENOMIC DNA]</scope>
    <source>
        <strain>536 / UPEC</strain>
    </source>
</reference>
<feature type="chain" id="PRO_1000009115" description="N-acetylmuramic acid 6-phosphate etherase">
    <location>
        <begin position="1"/>
        <end position="298"/>
    </location>
</feature>
<feature type="domain" description="SIS" evidence="1">
    <location>
        <begin position="55"/>
        <end position="218"/>
    </location>
</feature>
<feature type="active site" description="Proton donor" evidence="1">
    <location>
        <position position="83"/>
    </location>
</feature>
<feature type="active site" evidence="1">
    <location>
        <position position="114"/>
    </location>
</feature>
<gene>
    <name evidence="1" type="primary">murQ</name>
    <name type="ordered locus">ECP_2450</name>
</gene>
<name>MURQ_ECOL5</name>
<organism>
    <name type="scientific">Escherichia coli O6:K15:H31 (strain 536 / UPEC)</name>
    <dbReference type="NCBI Taxonomy" id="362663"/>
    <lineage>
        <taxon>Bacteria</taxon>
        <taxon>Pseudomonadati</taxon>
        <taxon>Pseudomonadota</taxon>
        <taxon>Gammaproteobacteria</taxon>
        <taxon>Enterobacterales</taxon>
        <taxon>Enterobacteriaceae</taxon>
        <taxon>Escherichia</taxon>
    </lineage>
</organism>
<sequence length="298" mass="31105">MQLEKMITEGSNAASAEIDRVSTLEMCRIINDEDKTVPLAVERVLPDIAAAIDVIHTQVSGGGRLIYLGAGTSGRLGILDASECPPTYGVKPGLVVGLIAGGEYAIQHAVEGAEDSREGGVNDLKNIGLTAQDVVVGIAASGRTPYVIAGLEYARQLGCRTVGISCNPGSAVSSTAEFAITPVVGAEVVTGSSRMKAGTAQKLVLNMLSTGLMIKSGKVFGNLMVDVVATNEKLHVRQVNIVKNATGCNAEQAEAALIACERNCKTAIVMVLKNLDADEAKKCLDQHGGFIRKALEKE</sequence>
<keyword id="KW-0119">Carbohydrate metabolism</keyword>
<keyword id="KW-0456">Lyase</keyword>